<protein>
    <recommendedName>
        <fullName>Uncharacterized protein YoaF</fullName>
    </recommendedName>
</protein>
<dbReference type="EMBL" id="AE005674">
    <property type="protein sequence ID" value="AAN43031.1"/>
    <property type="molecule type" value="Genomic_DNA"/>
</dbReference>
<dbReference type="EMBL" id="AE014073">
    <property type="protein sequence ID" value="AAP16926.1"/>
    <property type="molecule type" value="Genomic_DNA"/>
</dbReference>
<dbReference type="RefSeq" id="NP_707324.1">
    <property type="nucleotide sequence ID" value="NC_004337.2"/>
</dbReference>
<dbReference type="RefSeq" id="WP_000691930.1">
    <property type="nucleotide sequence ID" value="NZ_WPGW01000158.1"/>
</dbReference>
<dbReference type="STRING" id="198214.SF1431"/>
<dbReference type="PaxDb" id="198214-SF1431"/>
<dbReference type="GeneID" id="1027799"/>
<dbReference type="GeneID" id="75171860"/>
<dbReference type="KEGG" id="sfl:SF1431"/>
<dbReference type="KEGG" id="sfx:S1546"/>
<dbReference type="PATRIC" id="fig|198214.7.peg.1685"/>
<dbReference type="HOGENOM" id="CLU_155318_1_0_6"/>
<dbReference type="Proteomes" id="UP000001006">
    <property type="component" value="Chromosome"/>
</dbReference>
<dbReference type="Proteomes" id="UP000002673">
    <property type="component" value="Chromosome"/>
</dbReference>
<dbReference type="InterPro" id="IPR005590">
    <property type="entry name" value="DUF333"/>
</dbReference>
<dbReference type="PANTHER" id="PTHR38008:SF2">
    <property type="entry name" value="HEMOLYSIN"/>
    <property type="match status" value="1"/>
</dbReference>
<dbReference type="PANTHER" id="PTHR38008">
    <property type="entry name" value="HEMOLYSIN-RELATED"/>
    <property type="match status" value="1"/>
</dbReference>
<dbReference type="Pfam" id="PF03891">
    <property type="entry name" value="DUF333"/>
    <property type="match status" value="1"/>
</dbReference>
<dbReference type="PROSITE" id="PS51257">
    <property type="entry name" value="PROKAR_LIPOPROTEIN"/>
    <property type="match status" value="1"/>
</dbReference>
<gene>
    <name type="primary">yoaF</name>
    <name type="ordered locus">SF1431</name>
    <name type="ordered locus">S1546</name>
</gene>
<name>YOAF_SHIFL</name>
<sequence length="84" mass="8942">MKIISFVLPCLLVLAGCSTPSQPEAPKPPQIGMANPASVYCQQKGGTLIPVQTAQGVSNNCKLPGGETIDEWALWRRDHPAGEK</sequence>
<accession>P64495</accession>
<accession>P76244</accession>
<keyword id="KW-1185">Reference proteome</keyword>
<organism>
    <name type="scientific">Shigella flexneri</name>
    <dbReference type="NCBI Taxonomy" id="623"/>
    <lineage>
        <taxon>Bacteria</taxon>
        <taxon>Pseudomonadati</taxon>
        <taxon>Pseudomonadota</taxon>
        <taxon>Gammaproteobacteria</taxon>
        <taxon>Enterobacterales</taxon>
        <taxon>Enterobacteriaceae</taxon>
        <taxon>Shigella</taxon>
    </lineage>
</organism>
<feature type="chain" id="PRO_0000169036" description="Uncharacterized protein YoaF">
    <location>
        <begin position="1"/>
        <end position="84"/>
    </location>
</feature>
<reference key="1">
    <citation type="journal article" date="2002" name="Nucleic Acids Res.">
        <title>Genome sequence of Shigella flexneri 2a: insights into pathogenicity through comparison with genomes of Escherichia coli K12 and O157.</title>
        <authorList>
            <person name="Jin Q."/>
            <person name="Yuan Z."/>
            <person name="Xu J."/>
            <person name="Wang Y."/>
            <person name="Shen Y."/>
            <person name="Lu W."/>
            <person name="Wang J."/>
            <person name="Liu H."/>
            <person name="Yang J."/>
            <person name="Yang F."/>
            <person name="Zhang X."/>
            <person name="Zhang J."/>
            <person name="Yang G."/>
            <person name="Wu H."/>
            <person name="Qu D."/>
            <person name="Dong J."/>
            <person name="Sun L."/>
            <person name="Xue Y."/>
            <person name="Zhao A."/>
            <person name="Gao Y."/>
            <person name="Zhu J."/>
            <person name="Kan B."/>
            <person name="Ding K."/>
            <person name="Chen S."/>
            <person name="Cheng H."/>
            <person name="Yao Z."/>
            <person name="He B."/>
            <person name="Chen R."/>
            <person name="Ma D."/>
            <person name="Qiang B."/>
            <person name="Wen Y."/>
            <person name="Hou Y."/>
            <person name="Yu J."/>
        </authorList>
    </citation>
    <scope>NUCLEOTIDE SEQUENCE [LARGE SCALE GENOMIC DNA]</scope>
    <source>
        <strain>301 / Serotype 2a</strain>
    </source>
</reference>
<reference key="2">
    <citation type="journal article" date="2003" name="Infect. Immun.">
        <title>Complete genome sequence and comparative genomics of Shigella flexneri serotype 2a strain 2457T.</title>
        <authorList>
            <person name="Wei J."/>
            <person name="Goldberg M.B."/>
            <person name="Burland V."/>
            <person name="Venkatesan M.M."/>
            <person name="Deng W."/>
            <person name="Fournier G."/>
            <person name="Mayhew G.F."/>
            <person name="Plunkett G. III"/>
            <person name="Rose D.J."/>
            <person name="Darling A."/>
            <person name="Mau B."/>
            <person name="Perna N.T."/>
            <person name="Payne S.M."/>
            <person name="Runyen-Janecky L.J."/>
            <person name="Zhou S."/>
            <person name="Schwartz D.C."/>
            <person name="Blattner F.R."/>
        </authorList>
    </citation>
    <scope>NUCLEOTIDE SEQUENCE [LARGE SCALE GENOMIC DNA]</scope>
    <source>
        <strain>ATCC 700930 / 2457T / Serotype 2a</strain>
    </source>
</reference>
<proteinExistence type="predicted"/>